<comment type="function">
    <text evidence="1">Catalyzes the decarboxylation of S-adenosylmethionine to S-adenosylmethioninamine (dcAdoMet), the propylamine donor required for the synthesis of the polyamines spermine and spermidine from the diamine putrescine.</text>
</comment>
<comment type="catalytic activity">
    <reaction evidence="1">
        <text>S-adenosyl-L-methionine + H(+) = S-adenosyl 3-(methylsulfanyl)propylamine + CO2</text>
        <dbReference type="Rhea" id="RHEA:15981"/>
        <dbReference type="ChEBI" id="CHEBI:15378"/>
        <dbReference type="ChEBI" id="CHEBI:16526"/>
        <dbReference type="ChEBI" id="CHEBI:57443"/>
        <dbReference type="ChEBI" id="CHEBI:59789"/>
        <dbReference type="EC" id="4.1.1.50"/>
    </reaction>
</comment>
<comment type="cofactor">
    <cofactor evidence="1">
        <name>pyruvate</name>
        <dbReference type="ChEBI" id="CHEBI:15361"/>
    </cofactor>
    <text evidence="1">Binds 1 pyruvoyl group covalently per subunit.</text>
</comment>
<comment type="pathway">
    <text evidence="1">Amine and polyamine biosynthesis; S-adenosylmethioninamine biosynthesis; S-adenosylmethioninamine from S-adenosyl-L-methionine: step 1/1.</text>
</comment>
<comment type="subunit">
    <text evidence="1">Heterooctamer of four alpha and four beta chains arranged as a tetramer of alpha/beta heterodimers.</text>
</comment>
<comment type="PTM">
    <text evidence="1">Is synthesized initially as an inactive proenzyme. Formation of the active enzyme involves a self-maturation process in which the active site pyruvoyl group is generated from an internal serine residue via an autocatalytic post-translational modification. Two non-identical subunits are generated from the proenzyme in this reaction, and the pyruvate is formed at the N-terminus of the alpha chain, which is derived from the carboxyl end of the proenzyme. The post-translation cleavage follows an unusual pathway, termed non-hydrolytic serinolysis, in which the side chain hydroxyl group of the serine supplies its oxygen atom to form the C-terminus of the beta chain, while the remainder of the serine residue undergoes an oxidative deamination to produce ammonia and the pyruvoyl group blocking the N-terminus of the alpha chain.</text>
</comment>
<comment type="similarity">
    <text evidence="1">Belongs to the prokaryotic AdoMetDC family. Type 2 subfamily.</text>
</comment>
<comment type="sequence caution" evidence="2">
    <conflict type="erroneous initiation">
        <sequence resource="EMBL-CDS" id="CAP49837"/>
    </conflict>
</comment>
<keyword id="KW-0068">Autocatalytic cleavage</keyword>
<keyword id="KW-0210">Decarboxylase</keyword>
<keyword id="KW-0456">Lyase</keyword>
<keyword id="KW-0620">Polyamine biosynthesis</keyword>
<keyword id="KW-0670">Pyruvate</keyword>
<keyword id="KW-0949">S-adenosyl-L-methionine</keyword>
<keyword id="KW-0704">Schiff base</keyword>
<keyword id="KW-0745">Spermidine biosynthesis</keyword>
<keyword id="KW-0865">Zymogen</keyword>
<name>SPED_XANCB</name>
<gene>
    <name evidence="1" type="primary">speD</name>
    <name type="ordered locus">xcc-b100_0503</name>
</gene>
<evidence type="ECO:0000255" key="1">
    <source>
        <dbReference type="HAMAP-Rule" id="MF_00465"/>
    </source>
</evidence>
<evidence type="ECO:0000305" key="2"/>
<reference key="1">
    <citation type="journal article" date="2008" name="J. Biotechnol.">
        <title>The genome of Xanthomonas campestris pv. campestris B100 and its use for the reconstruction of metabolic pathways involved in xanthan biosynthesis.</title>
        <authorList>
            <person name="Vorhoelter F.-J."/>
            <person name="Schneiker S."/>
            <person name="Goesmann A."/>
            <person name="Krause L."/>
            <person name="Bekel T."/>
            <person name="Kaiser O."/>
            <person name="Linke B."/>
            <person name="Patschkowski T."/>
            <person name="Rueckert C."/>
            <person name="Schmid J."/>
            <person name="Sidhu V.K."/>
            <person name="Sieber V."/>
            <person name="Tauch A."/>
            <person name="Watt S.A."/>
            <person name="Weisshaar B."/>
            <person name="Becker A."/>
            <person name="Niehaus K."/>
            <person name="Puehler A."/>
        </authorList>
    </citation>
    <scope>NUCLEOTIDE SEQUENCE [LARGE SCALE GENOMIC DNA]</scope>
    <source>
        <strain>B100</strain>
    </source>
</reference>
<sequence length="264" mass="30815">MVKPLPRLRLQGFNNLTKALSFNIYDVCYARTEEERQRYIEYIDEQYDADRLTQILTDVAEIIGANILNIARQDYDPQGASVTILISEEPVIDKKQAGKELISDAVVAHMDKSHITVHTYPETHPQEGIATFRADIDVATCGVISPLKALNYLIESLESDIVIMDYRVRGFTRDVKGKKHYIDHKINSIQHFLAKNVKSRYEMFDVNVYQENIFHTKMHLKDFDLDQYLFEERAKNLSFKERMKIETLLKREIEELFHGRNLSE</sequence>
<protein>
    <recommendedName>
        <fullName evidence="1">S-adenosylmethionine decarboxylase proenzyme</fullName>
        <shortName evidence="1">AdoMetDC</shortName>
        <shortName evidence="1">SAMDC</shortName>
        <ecNumber evidence="1">4.1.1.50</ecNumber>
    </recommendedName>
    <component>
        <recommendedName>
            <fullName evidence="1">S-adenosylmethionine decarboxylase beta chain</fullName>
        </recommendedName>
    </component>
    <component>
        <recommendedName>
            <fullName evidence="1">S-adenosylmethionine decarboxylase alpha chain</fullName>
        </recommendedName>
    </component>
</protein>
<dbReference type="EC" id="4.1.1.50" evidence="1"/>
<dbReference type="EMBL" id="AM920689">
    <property type="protein sequence ID" value="CAP49837.1"/>
    <property type="status" value="ALT_INIT"/>
    <property type="molecule type" value="Genomic_DNA"/>
</dbReference>
<dbReference type="SMR" id="B0RN02"/>
<dbReference type="KEGG" id="xca:xcc-b100_0503"/>
<dbReference type="HOGENOM" id="CLU_092007_0_0_6"/>
<dbReference type="UniPathway" id="UPA00331">
    <property type="reaction ID" value="UER00451"/>
</dbReference>
<dbReference type="Proteomes" id="UP000001188">
    <property type="component" value="Chromosome"/>
</dbReference>
<dbReference type="GO" id="GO:0005829">
    <property type="term" value="C:cytosol"/>
    <property type="evidence" value="ECO:0007669"/>
    <property type="project" value="TreeGrafter"/>
</dbReference>
<dbReference type="GO" id="GO:0004014">
    <property type="term" value="F:adenosylmethionine decarboxylase activity"/>
    <property type="evidence" value="ECO:0007669"/>
    <property type="project" value="UniProtKB-UniRule"/>
</dbReference>
<dbReference type="GO" id="GO:0008295">
    <property type="term" value="P:spermidine biosynthetic process"/>
    <property type="evidence" value="ECO:0007669"/>
    <property type="project" value="UniProtKB-UniRule"/>
</dbReference>
<dbReference type="FunFam" id="3.60.90.10:FF:000001">
    <property type="entry name" value="S-adenosylmethionine decarboxylase proenzyme"/>
    <property type="match status" value="1"/>
</dbReference>
<dbReference type="Gene3D" id="3.60.90.10">
    <property type="entry name" value="S-adenosylmethionine decarboxylase"/>
    <property type="match status" value="1"/>
</dbReference>
<dbReference type="HAMAP" id="MF_00465">
    <property type="entry name" value="AdoMetDC_2"/>
    <property type="match status" value="1"/>
</dbReference>
<dbReference type="InterPro" id="IPR003826">
    <property type="entry name" value="AdoMetDC_fam_prok"/>
</dbReference>
<dbReference type="InterPro" id="IPR009165">
    <property type="entry name" value="S-AdoMet_deCO2ase_bac"/>
</dbReference>
<dbReference type="InterPro" id="IPR016067">
    <property type="entry name" value="S-AdoMet_deCO2ase_core"/>
</dbReference>
<dbReference type="NCBIfam" id="TIGR03331">
    <property type="entry name" value="SAM_DCase_Eco"/>
    <property type="match status" value="1"/>
</dbReference>
<dbReference type="PANTHER" id="PTHR33866">
    <property type="entry name" value="S-ADENOSYLMETHIONINE DECARBOXYLASE PROENZYME"/>
    <property type="match status" value="1"/>
</dbReference>
<dbReference type="PANTHER" id="PTHR33866:SF1">
    <property type="entry name" value="S-ADENOSYLMETHIONINE DECARBOXYLASE PROENZYME"/>
    <property type="match status" value="1"/>
</dbReference>
<dbReference type="Pfam" id="PF02675">
    <property type="entry name" value="AdoMet_dc"/>
    <property type="match status" value="1"/>
</dbReference>
<dbReference type="PIRSF" id="PIRSF001356">
    <property type="entry name" value="SAM_decarboxylas"/>
    <property type="match status" value="1"/>
</dbReference>
<dbReference type="SUPFAM" id="SSF56276">
    <property type="entry name" value="S-adenosylmethionine decarboxylase"/>
    <property type="match status" value="1"/>
</dbReference>
<accession>B0RN02</accession>
<feature type="chain" id="PRO_0000364419" description="S-adenosylmethionine decarboxylase beta chain" evidence="1">
    <location>
        <begin position="1"/>
        <end position="112"/>
    </location>
</feature>
<feature type="chain" id="PRO_0000364420" description="S-adenosylmethionine decarboxylase alpha chain" evidence="1">
    <location>
        <begin position="113"/>
        <end position="264"/>
    </location>
</feature>
<feature type="active site" description="Schiff-base intermediate with substrate; via pyruvic acid" evidence="1">
    <location>
        <position position="113"/>
    </location>
</feature>
<feature type="active site" description="Proton acceptor; for processing activity" evidence="1">
    <location>
        <position position="118"/>
    </location>
</feature>
<feature type="active site" description="Proton donor; for catalytic activity" evidence="1">
    <location>
        <position position="141"/>
    </location>
</feature>
<feature type="site" description="Cleavage (non-hydrolytic); by autolysis" evidence="1">
    <location>
        <begin position="112"/>
        <end position="113"/>
    </location>
</feature>
<feature type="modified residue" description="Pyruvic acid (Ser); by autocatalysis" evidence="1">
    <location>
        <position position="113"/>
    </location>
</feature>
<proteinExistence type="inferred from homology"/>
<organism>
    <name type="scientific">Xanthomonas campestris pv. campestris (strain B100)</name>
    <dbReference type="NCBI Taxonomy" id="509169"/>
    <lineage>
        <taxon>Bacteria</taxon>
        <taxon>Pseudomonadati</taxon>
        <taxon>Pseudomonadota</taxon>
        <taxon>Gammaproteobacteria</taxon>
        <taxon>Lysobacterales</taxon>
        <taxon>Lysobacteraceae</taxon>
        <taxon>Xanthomonas</taxon>
    </lineage>
</organism>